<name>MFTA_MYCS2</name>
<dbReference type="EMBL" id="CP000480">
    <property type="protein sequence ID" value="ABK75244.1"/>
    <property type="status" value="ALT_INIT"/>
    <property type="molecule type" value="Genomic_DNA"/>
</dbReference>
<dbReference type="RefSeq" id="WP_029104568.1">
    <property type="nucleotide sequence ID" value="NZ_SIJM01000016.1"/>
</dbReference>
<dbReference type="RefSeq" id="YP_885804.1">
    <property type="nucleotide sequence ID" value="NC_008596.1"/>
</dbReference>
<dbReference type="STRING" id="246196.MSMEG_1421"/>
<dbReference type="PaxDb" id="246196-MSMEI_1386"/>
<dbReference type="GeneID" id="93456265"/>
<dbReference type="KEGG" id="msm:MSMEG_1421"/>
<dbReference type="PATRIC" id="fig|246196.19.peg.1408"/>
<dbReference type="eggNOG" id="ENOG5031XER">
    <property type="taxonomic scope" value="Bacteria"/>
</dbReference>
<dbReference type="Proteomes" id="UP000000757">
    <property type="component" value="Chromosome"/>
</dbReference>
<dbReference type="InterPro" id="IPR023988">
    <property type="entry name" value="MftA"/>
</dbReference>
<dbReference type="NCBIfam" id="TIGR03969">
    <property type="entry name" value="mycofactocin"/>
    <property type="match status" value="1"/>
</dbReference>
<dbReference type="Pfam" id="PF23709">
    <property type="entry name" value="MftA"/>
    <property type="match status" value="1"/>
</dbReference>
<reference key="1">
    <citation type="submission" date="2006-10" db="EMBL/GenBank/DDBJ databases">
        <authorList>
            <person name="Fleischmann R.D."/>
            <person name="Dodson R.J."/>
            <person name="Haft D.H."/>
            <person name="Merkel J.S."/>
            <person name="Nelson W.C."/>
            <person name="Fraser C.M."/>
        </authorList>
    </citation>
    <scope>NUCLEOTIDE SEQUENCE [LARGE SCALE GENOMIC DNA]</scope>
    <source>
        <strain>ATCC 700084 / mc(2)155</strain>
    </source>
</reference>
<reference key="2">
    <citation type="journal article" date="2016" name="Biochemistry">
        <title>The Radical S-Adenosyl-L-methionine Enzyme MftC Catalyzes an Oxidative Decarboxylation of the C-Terminus of the MftA Peptide.</title>
        <authorList>
            <person name="Bruender N.A."/>
            <person name="Bandarian V."/>
        </authorList>
    </citation>
    <scope>FUNCTION</scope>
    <scope>DECARBOXYLATION</scope>
    <source>
        <strain>ATCC 700084 / mc(2)155</strain>
    </source>
</reference>
<reference key="3">
    <citation type="journal article" date="2017" name="J. Biol. Chem.">
        <title>The Creatininase Homolog MftE from Mycobacterium smegmatis Catalyzes a Peptide Cleavage Reaction in the Biosynthesis of a Novel Ribosomally Synthesized Post-translationally Modified Peptide (RiPP).</title>
        <authorList>
            <person name="Bruender N.A."/>
            <person name="Bandarian V."/>
        </authorList>
    </citation>
    <scope>CLEAVAGE</scope>
    <source>
        <strain>ATCC 700084 / mc(2)155</strain>
    </source>
</reference>
<reference key="4">
    <citation type="journal article" date="2018" name="Biochemistry">
        <title>Mycofactocin Biosynthesis Proceeds through 3-Amino-5-[(p-hydroxyphenyl)methyl]-4,4-dimethyl-2-pyrrolidinone (AHDP); Direct Observation of MftE Specificity toward MftA.</title>
        <authorList>
            <person name="Ayikpoe R."/>
            <person name="Salazar J."/>
            <person name="Majestic B."/>
            <person name="Latham J.A."/>
        </authorList>
    </citation>
    <scope>CLEAVAGE</scope>
    <source>
        <strain>ATCC 700084 / mc(2)155</strain>
    </source>
</reference>
<reference key="5">
    <citation type="journal article" date="2019" name="MBio">
        <title>Mycofactocin Is Associated with Ethanol Metabolism in Mycobacteria.</title>
        <authorList>
            <person name="Krishnamoorthy G."/>
            <person name="Kaiser P."/>
            <person name="Lozza L."/>
            <person name="Hahnke K."/>
            <person name="Mollenkopf H.J."/>
            <person name="Kaufmann S.H.E."/>
        </authorList>
    </citation>
    <scope>FUNCTION</scope>
    <scope>DISRUPTION PHENOTYPE</scope>
    <source>
        <strain>ATCC 700084 / mc(2)155</strain>
    </source>
</reference>
<protein>
    <recommendedName>
        <fullName evidence="7">Mycofactocin precursor peptide</fullName>
    </recommendedName>
</protein>
<accession>A0QSB6</accession>
<sequence length="31" mass="3453">MEPNQHVEAETELVTETLVEEVSIDGMCGVY</sequence>
<evidence type="ECO:0000269" key="1">
    <source>
    </source>
</evidence>
<evidence type="ECO:0000269" key="2">
    <source>
    </source>
</evidence>
<evidence type="ECO:0000269" key="3">
    <source>
    </source>
</evidence>
<evidence type="ECO:0000269" key="4">
    <source>
    </source>
</evidence>
<evidence type="ECO:0000303" key="5">
    <source>
    </source>
</evidence>
<evidence type="ECO:0000305" key="6"/>
<evidence type="ECO:0000305" key="7">
    <source>
    </source>
</evidence>
<evidence type="ECO:0000312" key="8">
    <source>
        <dbReference type="EMBL" id="ABK75244.1"/>
    </source>
</evidence>
<organism>
    <name type="scientific">Mycolicibacterium smegmatis (strain ATCC 700084 / mc(2)155)</name>
    <name type="common">Mycobacterium smegmatis</name>
    <dbReference type="NCBI Taxonomy" id="246196"/>
    <lineage>
        <taxon>Bacteria</taxon>
        <taxon>Bacillati</taxon>
        <taxon>Actinomycetota</taxon>
        <taxon>Actinomycetes</taxon>
        <taxon>Mycobacteriales</taxon>
        <taxon>Mycobacteriaceae</taxon>
        <taxon>Mycolicibacterium</taxon>
    </lineage>
</organism>
<gene>
    <name evidence="5" type="primary">mftA</name>
    <name evidence="8" type="ordered locus">MSMEG_1421</name>
</gene>
<comment type="function">
    <text evidence="1 4">Precursor peptide that leads to mycofactocin (MFT) after extensive post-translational modifications by enzymes encoded by adjacent genes. Mycofactocin acts as a redox cofactor of nicotinamide-dependent oxidoreductases encoded in the same locus (PubMed:27158836). Is required for the in vivo ethanol assimilation in M.smegmatis (PubMed:31113891).</text>
</comment>
<comment type="PTM">
    <text evidence="1 2 3">The post-translational modifications that lead to mycofactocin involve oxidative decarboxylation of the C-terminal tyrosine residue catalyzed by MftC, introduction of a tyramine-valine cross-link, removal of the modified C-terminal dipeptide by MftE. The released dipeptide then undergoes oxidative deamination by MftD, glycosylation by MftF and methylation by an unknown enzyme.</text>
</comment>
<comment type="disruption phenotype">
    <text evidence="4">Cells lacking this gene lose the ability to utilize ethanol as the sole growth substrate.</text>
</comment>
<comment type="miscellaneous">
    <text evidence="6">Mycofactocin is classified as a ribosomally synthesized and post-translationally modified peptide (RiPP).</text>
</comment>
<comment type="similarity">
    <text evidence="6">Belongs to the mycofactocin precursor peptide family.</text>
</comment>
<comment type="sequence caution" evidence="6">
    <conflict type="erroneous initiation">
        <sequence resource="EMBL-CDS" id="ABK75244"/>
    </conflict>
    <text>Extended N-terminus.</text>
</comment>
<feature type="chain" id="PRO_0000452056" description="Mycofactocin precursor peptide">
    <location>
        <begin position="1"/>
        <end position="31"/>
    </location>
</feature>
<feature type="site" description="Cleavage; by MftE" evidence="2 3">
    <location>
        <begin position="29"/>
        <end position="30"/>
    </location>
</feature>
<keyword id="KW-1185">Reference proteome</keyword>
<proteinExistence type="evidence at protein level"/>